<proteinExistence type="inferred from homology"/>
<name>PETN_CHAVU</name>
<accession>Q1ACN8</accession>
<comment type="function">
    <text evidence="1">Component of the cytochrome b6-f complex, which mediates electron transfer between photosystem II (PSII) and photosystem I (PSI), cyclic electron flow around PSI, and state transitions.</text>
</comment>
<comment type="subunit">
    <text evidence="1">The 4 large subunits of the cytochrome b6-f complex are cytochrome b6, subunit IV (17 kDa polypeptide, PetD), cytochrome f and the Rieske protein, while the 4 small subunits are PetG, PetL, PetM and PetN. The complex functions as a dimer.</text>
</comment>
<comment type="subcellular location">
    <subcellularLocation>
        <location>Plastid</location>
        <location>Chloroplast thylakoid membrane</location>
        <topology>Single-pass membrane protein</topology>
    </subcellularLocation>
</comment>
<comment type="similarity">
    <text evidence="1">Belongs to the PetN family.</text>
</comment>
<geneLocation type="chloroplast"/>
<reference key="1">
    <citation type="journal article" date="2006" name="Mol. Biol. Evol.">
        <title>The chloroplast genome sequence of Chara vulgaris sheds new light into the closest green algal relatives of land plants.</title>
        <authorList>
            <person name="Turmel M."/>
            <person name="Otis C."/>
            <person name="Lemieux C."/>
        </authorList>
    </citation>
    <scope>NUCLEOTIDE SEQUENCE [LARGE SCALE GENOMIC DNA]</scope>
</reference>
<gene>
    <name evidence="1" type="primary">petN</name>
</gene>
<feature type="chain" id="PRO_0000275544" description="Cytochrome b6-f complex subunit 8">
    <location>
        <begin position="1"/>
        <end position="29"/>
    </location>
</feature>
<feature type="transmembrane region" description="Helical" evidence="1">
    <location>
        <begin position="3"/>
        <end position="23"/>
    </location>
</feature>
<dbReference type="EMBL" id="DQ229107">
    <property type="protein sequence ID" value="ABA61943.1"/>
    <property type="molecule type" value="Genomic_DNA"/>
</dbReference>
<dbReference type="RefSeq" id="YP_635709.1">
    <property type="nucleotide sequence ID" value="NC_008097.1"/>
</dbReference>
<dbReference type="SMR" id="Q1ACN8"/>
<dbReference type="GeneID" id="4100309"/>
<dbReference type="GO" id="GO:0009535">
    <property type="term" value="C:chloroplast thylakoid membrane"/>
    <property type="evidence" value="ECO:0007669"/>
    <property type="project" value="UniProtKB-SubCell"/>
</dbReference>
<dbReference type="GO" id="GO:0009512">
    <property type="term" value="C:cytochrome b6f complex"/>
    <property type="evidence" value="ECO:0007669"/>
    <property type="project" value="InterPro"/>
</dbReference>
<dbReference type="GO" id="GO:0045158">
    <property type="term" value="F:electron transporter, transferring electrons within cytochrome b6/f complex of photosystem II activity"/>
    <property type="evidence" value="ECO:0007669"/>
    <property type="project" value="InterPro"/>
</dbReference>
<dbReference type="GO" id="GO:0017004">
    <property type="term" value="P:cytochrome complex assembly"/>
    <property type="evidence" value="ECO:0007669"/>
    <property type="project" value="UniProtKB-UniRule"/>
</dbReference>
<dbReference type="GO" id="GO:0015979">
    <property type="term" value="P:photosynthesis"/>
    <property type="evidence" value="ECO:0007669"/>
    <property type="project" value="UniProtKB-KW"/>
</dbReference>
<dbReference type="HAMAP" id="MF_00395">
    <property type="entry name" value="Cytb6_f_PetN"/>
    <property type="match status" value="1"/>
</dbReference>
<dbReference type="InterPro" id="IPR036143">
    <property type="entry name" value="Cytochr_b6-f_cplx_su8_sf"/>
</dbReference>
<dbReference type="InterPro" id="IPR005497">
    <property type="entry name" value="Cytochrome_b6-f_cplx_su8"/>
</dbReference>
<dbReference type="Pfam" id="PF03742">
    <property type="entry name" value="PetN"/>
    <property type="match status" value="1"/>
</dbReference>
<dbReference type="SUPFAM" id="SSF103451">
    <property type="entry name" value="PetN subunit of the cytochrome b6f complex"/>
    <property type="match status" value="1"/>
</dbReference>
<protein>
    <recommendedName>
        <fullName evidence="1">Cytochrome b6-f complex subunit 8</fullName>
    </recommendedName>
    <alternativeName>
        <fullName evidence="1">Cytochrome b6-f complex subunit PetN</fullName>
    </alternativeName>
    <alternativeName>
        <fullName evidence="1">Cytochrome b6-f complex subunit VIII</fullName>
    </alternativeName>
</protein>
<evidence type="ECO:0000255" key="1">
    <source>
        <dbReference type="HAMAP-Rule" id="MF_00395"/>
    </source>
</evidence>
<sequence length="29" mass="3276">MDILSISWAFLMVVFTFSLSLVVWGRSGL</sequence>
<keyword id="KW-0150">Chloroplast</keyword>
<keyword id="KW-0249">Electron transport</keyword>
<keyword id="KW-0472">Membrane</keyword>
<keyword id="KW-0602">Photosynthesis</keyword>
<keyword id="KW-0934">Plastid</keyword>
<keyword id="KW-0793">Thylakoid</keyword>
<keyword id="KW-0812">Transmembrane</keyword>
<keyword id="KW-1133">Transmembrane helix</keyword>
<keyword id="KW-0813">Transport</keyword>
<organism>
    <name type="scientific">Chara vulgaris</name>
    <name type="common">Common stonewort</name>
    <dbReference type="NCBI Taxonomy" id="55564"/>
    <lineage>
        <taxon>Eukaryota</taxon>
        <taxon>Viridiplantae</taxon>
        <taxon>Streptophyta</taxon>
        <taxon>Charophyceae</taxon>
        <taxon>Charales</taxon>
        <taxon>Characeae</taxon>
        <taxon>Chara</taxon>
    </lineage>
</organism>